<organism>
    <name type="scientific">Chlamydia felis (strain Fe/C-56)</name>
    <name type="common">Chlamydophila felis</name>
    <dbReference type="NCBI Taxonomy" id="264202"/>
    <lineage>
        <taxon>Bacteria</taxon>
        <taxon>Pseudomonadati</taxon>
        <taxon>Chlamydiota</taxon>
        <taxon>Chlamydiia</taxon>
        <taxon>Chlamydiales</taxon>
        <taxon>Chlamydiaceae</taxon>
        <taxon>Chlamydia/Chlamydophila group</taxon>
        <taxon>Chlamydia</taxon>
    </lineage>
</organism>
<comment type="function">
    <text evidence="1">Catalyzes the oxidation of 5,10-methylenetetrahydrofolate to 5,10-methenyltetrahydrofolate and then the hydrolysis of 5,10-methenyltetrahydrofolate to 10-formyltetrahydrofolate.</text>
</comment>
<comment type="catalytic activity">
    <reaction evidence="1">
        <text>(6R)-5,10-methylene-5,6,7,8-tetrahydrofolate + NADP(+) = (6R)-5,10-methenyltetrahydrofolate + NADPH</text>
        <dbReference type="Rhea" id="RHEA:22812"/>
        <dbReference type="ChEBI" id="CHEBI:15636"/>
        <dbReference type="ChEBI" id="CHEBI:57455"/>
        <dbReference type="ChEBI" id="CHEBI:57783"/>
        <dbReference type="ChEBI" id="CHEBI:58349"/>
        <dbReference type="EC" id="1.5.1.5"/>
    </reaction>
</comment>
<comment type="catalytic activity">
    <reaction evidence="1">
        <text>(6R)-5,10-methenyltetrahydrofolate + H2O = (6R)-10-formyltetrahydrofolate + H(+)</text>
        <dbReference type="Rhea" id="RHEA:23700"/>
        <dbReference type="ChEBI" id="CHEBI:15377"/>
        <dbReference type="ChEBI" id="CHEBI:15378"/>
        <dbReference type="ChEBI" id="CHEBI:57455"/>
        <dbReference type="ChEBI" id="CHEBI:195366"/>
        <dbReference type="EC" id="3.5.4.9"/>
    </reaction>
</comment>
<comment type="pathway">
    <text evidence="1">One-carbon metabolism; tetrahydrofolate interconversion.</text>
</comment>
<comment type="subunit">
    <text evidence="1">Homodimer.</text>
</comment>
<comment type="similarity">
    <text evidence="1">Belongs to the tetrahydrofolate dehydrogenase/cyclohydrolase family.</text>
</comment>
<proteinExistence type="inferred from homology"/>
<evidence type="ECO:0000255" key="1">
    <source>
        <dbReference type="HAMAP-Rule" id="MF_01576"/>
    </source>
</evidence>
<sequence>MLLKGTPVAERILEKLKQKISQSPTPPGLAVVLIGNDPASEVYVGMKVKKAMNLGMVSKAHRLPSDATLTDILKLIERLNNDPTIHGILVQIPLPKHLDSNVIIQAISPEKDVDGLHPVNMGKLLLGQLGGFSPCTPAAVIELLNYYDIPLQGRHVAVVGRSNIVGKPLAAMLMQKHPTTNATVTLLHSQSQNFTEILKTADIIVAAVGVPLFIQENMISPNAVIVDVGISRVATNNDKGYMLVGDVDFNNVVTKCKAITPVPGGVGPMTVAMLMKNTWESYQKSSS</sequence>
<accession>Q254F7</accession>
<keyword id="KW-0028">Amino-acid biosynthesis</keyword>
<keyword id="KW-0368">Histidine biosynthesis</keyword>
<keyword id="KW-0378">Hydrolase</keyword>
<keyword id="KW-0486">Methionine biosynthesis</keyword>
<keyword id="KW-0511">Multifunctional enzyme</keyword>
<keyword id="KW-0521">NADP</keyword>
<keyword id="KW-0554">One-carbon metabolism</keyword>
<keyword id="KW-0560">Oxidoreductase</keyword>
<keyword id="KW-0658">Purine biosynthesis</keyword>
<dbReference type="EC" id="1.5.1.5" evidence="1"/>
<dbReference type="EC" id="3.5.4.9" evidence="1"/>
<dbReference type="EMBL" id="AP006861">
    <property type="protein sequence ID" value="BAE81331.1"/>
    <property type="molecule type" value="Genomic_DNA"/>
</dbReference>
<dbReference type="RefSeq" id="WP_011458111.1">
    <property type="nucleotide sequence ID" value="NC_007899.1"/>
</dbReference>
<dbReference type="SMR" id="Q254F7"/>
<dbReference type="STRING" id="264202.CF0559"/>
<dbReference type="KEGG" id="cfe:CF0559"/>
<dbReference type="eggNOG" id="COG0190">
    <property type="taxonomic scope" value="Bacteria"/>
</dbReference>
<dbReference type="HOGENOM" id="CLU_034045_2_0_0"/>
<dbReference type="OrthoDB" id="9803580at2"/>
<dbReference type="UniPathway" id="UPA00193"/>
<dbReference type="Proteomes" id="UP000001260">
    <property type="component" value="Chromosome"/>
</dbReference>
<dbReference type="GO" id="GO:0005829">
    <property type="term" value="C:cytosol"/>
    <property type="evidence" value="ECO:0007669"/>
    <property type="project" value="TreeGrafter"/>
</dbReference>
<dbReference type="GO" id="GO:0004477">
    <property type="term" value="F:methenyltetrahydrofolate cyclohydrolase activity"/>
    <property type="evidence" value="ECO:0007669"/>
    <property type="project" value="UniProtKB-UniRule"/>
</dbReference>
<dbReference type="GO" id="GO:0004488">
    <property type="term" value="F:methylenetetrahydrofolate dehydrogenase (NADP+) activity"/>
    <property type="evidence" value="ECO:0007669"/>
    <property type="project" value="UniProtKB-UniRule"/>
</dbReference>
<dbReference type="GO" id="GO:0000105">
    <property type="term" value="P:L-histidine biosynthetic process"/>
    <property type="evidence" value="ECO:0007669"/>
    <property type="project" value="UniProtKB-KW"/>
</dbReference>
<dbReference type="GO" id="GO:0009086">
    <property type="term" value="P:methionine biosynthetic process"/>
    <property type="evidence" value="ECO:0007669"/>
    <property type="project" value="UniProtKB-KW"/>
</dbReference>
<dbReference type="GO" id="GO:0006164">
    <property type="term" value="P:purine nucleotide biosynthetic process"/>
    <property type="evidence" value="ECO:0007669"/>
    <property type="project" value="UniProtKB-KW"/>
</dbReference>
<dbReference type="GO" id="GO:0035999">
    <property type="term" value="P:tetrahydrofolate interconversion"/>
    <property type="evidence" value="ECO:0007669"/>
    <property type="project" value="UniProtKB-UniRule"/>
</dbReference>
<dbReference type="CDD" id="cd01080">
    <property type="entry name" value="NAD_bind_m-THF_DH_Cyclohyd"/>
    <property type="match status" value="1"/>
</dbReference>
<dbReference type="FunFam" id="3.40.50.720:FF:000189">
    <property type="entry name" value="Bifunctional protein FolD"/>
    <property type="match status" value="1"/>
</dbReference>
<dbReference type="FunFam" id="3.40.50.10860:FF:000005">
    <property type="entry name" value="C-1-tetrahydrofolate synthase, cytoplasmic, putative"/>
    <property type="match status" value="1"/>
</dbReference>
<dbReference type="Gene3D" id="3.40.50.10860">
    <property type="entry name" value="Leucine Dehydrogenase, chain A, domain 1"/>
    <property type="match status" value="1"/>
</dbReference>
<dbReference type="Gene3D" id="3.40.50.720">
    <property type="entry name" value="NAD(P)-binding Rossmann-like Domain"/>
    <property type="match status" value="1"/>
</dbReference>
<dbReference type="HAMAP" id="MF_01576">
    <property type="entry name" value="THF_DHG_CYH"/>
    <property type="match status" value="1"/>
</dbReference>
<dbReference type="InterPro" id="IPR046346">
    <property type="entry name" value="Aminoacid_DH-like_N_sf"/>
</dbReference>
<dbReference type="InterPro" id="IPR036291">
    <property type="entry name" value="NAD(P)-bd_dom_sf"/>
</dbReference>
<dbReference type="InterPro" id="IPR000672">
    <property type="entry name" value="THF_DH/CycHdrlase"/>
</dbReference>
<dbReference type="InterPro" id="IPR020630">
    <property type="entry name" value="THF_DH/CycHdrlase_cat_dom"/>
</dbReference>
<dbReference type="InterPro" id="IPR020867">
    <property type="entry name" value="THF_DH/CycHdrlase_CS"/>
</dbReference>
<dbReference type="InterPro" id="IPR020631">
    <property type="entry name" value="THF_DH/CycHdrlase_NAD-bd_dom"/>
</dbReference>
<dbReference type="NCBIfam" id="NF010778">
    <property type="entry name" value="PRK14181.1"/>
    <property type="match status" value="1"/>
</dbReference>
<dbReference type="PANTHER" id="PTHR48099:SF5">
    <property type="entry name" value="C-1-TETRAHYDROFOLATE SYNTHASE, CYTOPLASMIC"/>
    <property type="match status" value="1"/>
</dbReference>
<dbReference type="PANTHER" id="PTHR48099">
    <property type="entry name" value="C-1-TETRAHYDROFOLATE SYNTHASE, CYTOPLASMIC-RELATED"/>
    <property type="match status" value="1"/>
</dbReference>
<dbReference type="Pfam" id="PF00763">
    <property type="entry name" value="THF_DHG_CYH"/>
    <property type="match status" value="1"/>
</dbReference>
<dbReference type="Pfam" id="PF02882">
    <property type="entry name" value="THF_DHG_CYH_C"/>
    <property type="match status" value="1"/>
</dbReference>
<dbReference type="PRINTS" id="PR00085">
    <property type="entry name" value="THFDHDRGNASE"/>
</dbReference>
<dbReference type="SUPFAM" id="SSF53223">
    <property type="entry name" value="Aminoacid dehydrogenase-like, N-terminal domain"/>
    <property type="match status" value="1"/>
</dbReference>
<dbReference type="SUPFAM" id="SSF51735">
    <property type="entry name" value="NAD(P)-binding Rossmann-fold domains"/>
    <property type="match status" value="1"/>
</dbReference>
<dbReference type="PROSITE" id="PS00767">
    <property type="entry name" value="THF_DHG_CYH_2"/>
    <property type="match status" value="1"/>
</dbReference>
<protein>
    <recommendedName>
        <fullName evidence="1">Bifunctional protein FolD</fullName>
    </recommendedName>
    <domain>
        <recommendedName>
            <fullName evidence="1">Methylenetetrahydrofolate dehydrogenase</fullName>
            <ecNumber evidence="1">1.5.1.5</ecNumber>
        </recommendedName>
    </domain>
    <domain>
        <recommendedName>
            <fullName evidence="1">Methenyltetrahydrofolate cyclohydrolase</fullName>
            <ecNumber evidence="1">3.5.4.9</ecNumber>
        </recommendedName>
    </domain>
</protein>
<feature type="chain" id="PRO_0000268311" description="Bifunctional protein FolD">
    <location>
        <begin position="1"/>
        <end position="287"/>
    </location>
</feature>
<feature type="binding site" evidence="1">
    <location>
        <begin position="160"/>
        <end position="162"/>
    </location>
    <ligand>
        <name>NADP(+)</name>
        <dbReference type="ChEBI" id="CHEBI:58349"/>
    </ligand>
</feature>
<feature type="binding site" evidence="1">
    <location>
        <position position="189"/>
    </location>
    <ligand>
        <name>NADP(+)</name>
        <dbReference type="ChEBI" id="CHEBI:58349"/>
    </ligand>
</feature>
<feature type="binding site" evidence="1">
    <location>
        <position position="230"/>
    </location>
    <ligand>
        <name>NADP(+)</name>
        <dbReference type="ChEBI" id="CHEBI:58349"/>
    </ligand>
</feature>
<reference key="1">
    <citation type="journal article" date="2006" name="DNA Res.">
        <title>Genome sequence of the cat pathogen, Chlamydophila felis.</title>
        <authorList>
            <person name="Azuma Y."/>
            <person name="Hirakawa H."/>
            <person name="Yamashita A."/>
            <person name="Cai Y."/>
            <person name="Rahman M.A."/>
            <person name="Suzuki H."/>
            <person name="Mitaku S."/>
            <person name="Toh H."/>
            <person name="Goto S."/>
            <person name="Murakami T."/>
            <person name="Sugi K."/>
            <person name="Hayashi H."/>
            <person name="Fukushi H."/>
            <person name="Hattori M."/>
            <person name="Kuhara S."/>
            <person name="Shirai M."/>
        </authorList>
    </citation>
    <scope>NUCLEOTIDE SEQUENCE [LARGE SCALE GENOMIC DNA]</scope>
    <source>
        <strain>Fe/C-56</strain>
    </source>
</reference>
<name>FOLD_CHLFF</name>
<gene>
    <name evidence="1" type="primary">folD</name>
    <name type="ordered locus">CF0559</name>
</gene>